<protein>
    <recommendedName>
        <fullName>Uncharacterized protein MJ1233</fullName>
    </recommendedName>
</protein>
<feature type="chain" id="PRO_0000107229" description="Uncharacterized protein MJ1233">
    <location>
        <begin position="1"/>
        <end position="288"/>
    </location>
</feature>
<sequence>MSKITLVLTMNYITSKIAKEILNSQSEEIFLNLDLNKTEKKEKILIDREKKIAKFPEGDVSFDILKKIAKDEGHIYFIKDGEVFKAAISNNGYYKLVPTIPPTIEINGIRMHRTKEVNPYEDTLNKINAVKVKKGEKVLDTCMGLGYTAIEAYRRGAEVITIEKNPNVLELAKINPYSEELFKGGIKIILGDAYDVIKRFKDEEFDVVIHDPPRFSLAGHLYSEEFYKEIFRVLKPGGRLFHYVGNPGKKYRGKDLQKGVMERLRKVGFVNVKRVEEALGVVAVKPRD</sequence>
<gene>
    <name type="ordered locus">MJ1233</name>
</gene>
<name>Y1233_METJA</name>
<keyword id="KW-1185">Reference proteome</keyword>
<dbReference type="EMBL" id="L77117">
    <property type="protein sequence ID" value="AAB99243.1"/>
    <property type="molecule type" value="Genomic_DNA"/>
</dbReference>
<dbReference type="PIR" id="H64453">
    <property type="entry name" value="H64453"/>
</dbReference>
<dbReference type="SMR" id="Q58630"/>
<dbReference type="STRING" id="243232.MJ_1233"/>
<dbReference type="PaxDb" id="243232-MJ_1233"/>
<dbReference type="EnsemblBacteria" id="AAB99243">
    <property type="protein sequence ID" value="AAB99243"/>
    <property type="gene ID" value="MJ_1233"/>
</dbReference>
<dbReference type="KEGG" id="mja:MJ_1233"/>
<dbReference type="eggNOG" id="arCOG00054">
    <property type="taxonomic scope" value="Archaea"/>
</dbReference>
<dbReference type="HOGENOM" id="CLU_057700_0_0_2"/>
<dbReference type="InParanoid" id="Q58630"/>
<dbReference type="PhylomeDB" id="Q58630"/>
<dbReference type="Proteomes" id="UP000000805">
    <property type="component" value="Chromosome"/>
</dbReference>
<dbReference type="GO" id="GO:0008168">
    <property type="term" value="F:methyltransferase activity"/>
    <property type="evidence" value="ECO:0000318"/>
    <property type="project" value="GO_Central"/>
</dbReference>
<dbReference type="GO" id="GO:0008757">
    <property type="term" value="F:S-adenosylmethionine-dependent methyltransferase activity"/>
    <property type="evidence" value="ECO:0007669"/>
    <property type="project" value="InterPro"/>
</dbReference>
<dbReference type="CDD" id="cd02440">
    <property type="entry name" value="AdoMet_MTases"/>
    <property type="match status" value="1"/>
</dbReference>
<dbReference type="Gene3D" id="3.40.50.150">
    <property type="entry name" value="Vaccinia Virus protein VP39"/>
    <property type="match status" value="1"/>
</dbReference>
<dbReference type="InterPro" id="IPR050447">
    <property type="entry name" value="Erg6_SMT_methyltransf"/>
</dbReference>
<dbReference type="InterPro" id="IPR013216">
    <property type="entry name" value="Methyltransf_11"/>
</dbReference>
<dbReference type="InterPro" id="IPR029063">
    <property type="entry name" value="SAM-dependent_MTases_sf"/>
</dbReference>
<dbReference type="PANTHER" id="PTHR44068:SF11">
    <property type="entry name" value="GERANYL DIPHOSPHATE 2-C-METHYLTRANSFERASE"/>
    <property type="match status" value="1"/>
</dbReference>
<dbReference type="PANTHER" id="PTHR44068">
    <property type="entry name" value="ZGC:194242"/>
    <property type="match status" value="1"/>
</dbReference>
<dbReference type="Pfam" id="PF08241">
    <property type="entry name" value="Methyltransf_11"/>
    <property type="match status" value="1"/>
</dbReference>
<dbReference type="SUPFAM" id="SSF53335">
    <property type="entry name" value="S-adenosyl-L-methionine-dependent methyltransferases"/>
    <property type="match status" value="1"/>
</dbReference>
<proteinExistence type="predicted"/>
<accession>Q58630</accession>
<organism>
    <name type="scientific">Methanocaldococcus jannaschii (strain ATCC 43067 / DSM 2661 / JAL-1 / JCM 10045 / NBRC 100440)</name>
    <name type="common">Methanococcus jannaschii</name>
    <dbReference type="NCBI Taxonomy" id="243232"/>
    <lineage>
        <taxon>Archaea</taxon>
        <taxon>Methanobacteriati</taxon>
        <taxon>Methanobacteriota</taxon>
        <taxon>Methanomada group</taxon>
        <taxon>Methanococci</taxon>
        <taxon>Methanococcales</taxon>
        <taxon>Methanocaldococcaceae</taxon>
        <taxon>Methanocaldococcus</taxon>
    </lineage>
</organism>
<reference key="1">
    <citation type="journal article" date="1996" name="Science">
        <title>Complete genome sequence of the methanogenic archaeon, Methanococcus jannaschii.</title>
        <authorList>
            <person name="Bult C.J."/>
            <person name="White O."/>
            <person name="Olsen G.J."/>
            <person name="Zhou L."/>
            <person name="Fleischmann R.D."/>
            <person name="Sutton G.G."/>
            <person name="Blake J.A."/>
            <person name="FitzGerald L.M."/>
            <person name="Clayton R.A."/>
            <person name="Gocayne J.D."/>
            <person name="Kerlavage A.R."/>
            <person name="Dougherty B.A."/>
            <person name="Tomb J.-F."/>
            <person name="Adams M.D."/>
            <person name="Reich C.I."/>
            <person name="Overbeek R."/>
            <person name="Kirkness E.F."/>
            <person name="Weinstock K.G."/>
            <person name="Merrick J.M."/>
            <person name="Glodek A."/>
            <person name="Scott J.L."/>
            <person name="Geoghagen N.S.M."/>
            <person name="Weidman J.F."/>
            <person name="Fuhrmann J.L."/>
            <person name="Nguyen D."/>
            <person name="Utterback T.R."/>
            <person name="Kelley J.M."/>
            <person name="Peterson J.D."/>
            <person name="Sadow P.W."/>
            <person name="Hanna M.C."/>
            <person name="Cotton M.D."/>
            <person name="Roberts K.M."/>
            <person name="Hurst M.A."/>
            <person name="Kaine B.P."/>
            <person name="Borodovsky M."/>
            <person name="Klenk H.-P."/>
            <person name="Fraser C.M."/>
            <person name="Smith H.O."/>
            <person name="Woese C.R."/>
            <person name="Venter J.C."/>
        </authorList>
    </citation>
    <scope>NUCLEOTIDE SEQUENCE [LARGE SCALE GENOMIC DNA]</scope>
    <source>
        <strain>ATCC 43067 / DSM 2661 / JAL-1 / JCM 10045 / NBRC 100440</strain>
    </source>
</reference>